<protein>
    <recommendedName>
        <fullName>Protein S100-A13</fullName>
    </recommendedName>
    <alternativeName>
        <fullName>S100 calcium-binding protein A13</fullName>
    </alternativeName>
</protein>
<sequence length="98" mass="11471">MAAEPLTELEESIETVVTTFFTFARQEGRKDSLSVNEFKELVTQQLPHLLKDVGSLDEKMKSLDVNQDSELKFNEYWRLIGELAKEIRKKKDLKIRKK</sequence>
<reference key="1">
    <citation type="journal article" date="1996" name="Biochem. Biophys. Res. Commun.">
        <title>Characterization of the human and mouse cDNAs coding for S100A13, a new member of the S100 protein family.</title>
        <authorList>
            <person name="Wicki R."/>
            <person name="Schaefer B.W."/>
            <person name="Erne P."/>
            <person name="Heizmann C.W."/>
        </authorList>
    </citation>
    <scope>NUCLEOTIDE SEQUENCE [MRNA]</scope>
</reference>
<reference key="2">
    <citation type="submission" date="2004-06" db="EMBL/GenBank/DDBJ databases">
        <title>Cloning of human full open reading frames in Gateway(TM) system entry vector (pDONR201).</title>
        <authorList>
            <person name="Halleck A."/>
            <person name="Ebert L."/>
            <person name="Mkoundinya M."/>
            <person name="Schick M."/>
            <person name="Eisenstein S."/>
            <person name="Neubert P."/>
            <person name="Kstrang K."/>
            <person name="Schatten R."/>
            <person name="Shen B."/>
            <person name="Henze S."/>
            <person name="Mar W."/>
            <person name="Korn B."/>
            <person name="Zuo D."/>
            <person name="Hu Y."/>
            <person name="LaBaer J."/>
        </authorList>
    </citation>
    <scope>NUCLEOTIDE SEQUENCE [LARGE SCALE MRNA]</scope>
</reference>
<reference key="3">
    <citation type="submission" date="2004-10" db="EMBL/GenBank/DDBJ databases">
        <title>Cloning of human full-length CDSs in BD Creator(TM) system donor vector.</title>
        <authorList>
            <person name="Kalnine N."/>
            <person name="Chen X."/>
            <person name="Rolfs A."/>
            <person name="Halleck A."/>
            <person name="Hines L."/>
            <person name="Eisenstein S."/>
            <person name="Koundinya M."/>
            <person name="Raphael J."/>
            <person name="Moreira D."/>
            <person name="Kelley T."/>
            <person name="LaBaer J."/>
            <person name="Lin Y."/>
            <person name="Phelan M."/>
            <person name="Farmer A."/>
        </authorList>
    </citation>
    <scope>NUCLEOTIDE SEQUENCE [LARGE SCALE MRNA]</scope>
</reference>
<reference key="4">
    <citation type="journal article" date="2006" name="Nature">
        <title>The DNA sequence and biological annotation of human chromosome 1.</title>
        <authorList>
            <person name="Gregory S.G."/>
            <person name="Barlow K.F."/>
            <person name="McLay K.E."/>
            <person name="Kaul R."/>
            <person name="Swarbreck D."/>
            <person name="Dunham A."/>
            <person name="Scott C.E."/>
            <person name="Howe K.L."/>
            <person name="Woodfine K."/>
            <person name="Spencer C.C.A."/>
            <person name="Jones M.C."/>
            <person name="Gillson C."/>
            <person name="Searle S."/>
            <person name="Zhou Y."/>
            <person name="Kokocinski F."/>
            <person name="McDonald L."/>
            <person name="Evans R."/>
            <person name="Phillips K."/>
            <person name="Atkinson A."/>
            <person name="Cooper R."/>
            <person name="Jones C."/>
            <person name="Hall R.E."/>
            <person name="Andrews T.D."/>
            <person name="Lloyd C."/>
            <person name="Ainscough R."/>
            <person name="Almeida J.P."/>
            <person name="Ambrose K.D."/>
            <person name="Anderson F."/>
            <person name="Andrew R.W."/>
            <person name="Ashwell R.I.S."/>
            <person name="Aubin K."/>
            <person name="Babbage A.K."/>
            <person name="Bagguley C.L."/>
            <person name="Bailey J."/>
            <person name="Beasley H."/>
            <person name="Bethel G."/>
            <person name="Bird C.P."/>
            <person name="Bray-Allen S."/>
            <person name="Brown J.Y."/>
            <person name="Brown A.J."/>
            <person name="Buckley D."/>
            <person name="Burton J."/>
            <person name="Bye J."/>
            <person name="Carder C."/>
            <person name="Chapman J.C."/>
            <person name="Clark S.Y."/>
            <person name="Clarke G."/>
            <person name="Clee C."/>
            <person name="Cobley V."/>
            <person name="Collier R.E."/>
            <person name="Corby N."/>
            <person name="Coville G.J."/>
            <person name="Davies J."/>
            <person name="Deadman R."/>
            <person name="Dunn M."/>
            <person name="Earthrowl M."/>
            <person name="Ellington A.G."/>
            <person name="Errington H."/>
            <person name="Frankish A."/>
            <person name="Frankland J."/>
            <person name="French L."/>
            <person name="Garner P."/>
            <person name="Garnett J."/>
            <person name="Gay L."/>
            <person name="Ghori M.R.J."/>
            <person name="Gibson R."/>
            <person name="Gilby L.M."/>
            <person name="Gillett W."/>
            <person name="Glithero R.J."/>
            <person name="Grafham D.V."/>
            <person name="Griffiths C."/>
            <person name="Griffiths-Jones S."/>
            <person name="Grocock R."/>
            <person name="Hammond S."/>
            <person name="Harrison E.S.I."/>
            <person name="Hart E."/>
            <person name="Haugen E."/>
            <person name="Heath P.D."/>
            <person name="Holmes S."/>
            <person name="Holt K."/>
            <person name="Howden P.J."/>
            <person name="Hunt A.R."/>
            <person name="Hunt S.E."/>
            <person name="Hunter G."/>
            <person name="Isherwood J."/>
            <person name="James R."/>
            <person name="Johnson C."/>
            <person name="Johnson D."/>
            <person name="Joy A."/>
            <person name="Kay M."/>
            <person name="Kershaw J.K."/>
            <person name="Kibukawa M."/>
            <person name="Kimberley A.M."/>
            <person name="King A."/>
            <person name="Knights A.J."/>
            <person name="Lad H."/>
            <person name="Laird G."/>
            <person name="Lawlor S."/>
            <person name="Leongamornlert D.A."/>
            <person name="Lloyd D.M."/>
            <person name="Loveland J."/>
            <person name="Lovell J."/>
            <person name="Lush M.J."/>
            <person name="Lyne R."/>
            <person name="Martin S."/>
            <person name="Mashreghi-Mohammadi M."/>
            <person name="Matthews L."/>
            <person name="Matthews N.S.W."/>
            <person name="McLaren S."/>
            <person name="Milne S."/>
            <person name="Mistry S."/>
            <person name="Moore M.J.F."/>
            <person name="Nickerson T."/>
            <person name="O'Dell C.N."/>
            <person name="Oliver K."/>
            <person name="Palmeiri A."/>
            <person name="Palmer S.A."/>
            <person name="Parker A."/>
            <person name="Patel D."/>
            <person name="Pearce A.V."/>
            <person name="Peck A.I."/>
            <person name="Pelan S."/>
            <person name="Phelps K."/>
            <person name="Phillimore B.J."/>
            <person name="Plumb R."/>
            <person name="Rajan J."/>
            <person name="Raymond C."/>
            <person name="Rouse G."/>
            <person name="Saenphimmachak C."/>
            <person name="Sehra H.K."/>
            <person name="Sheridan E."/>
            <person name="Shownkeen R."/>
            <person name="Sims S."/>
            <person name="Skuce C.D."/>
            <person name="Smith M."/>
            <person name="Steward C."/>
            <person name="Subramanian S."/>
            <person name="Sycamore N."/>
            <person name="Tracey A."/>
            <person name="Tromans A."/>
            <person name="Van Helmond Z."/>
            <person name="Wall M."/>
            <person name="Wallis J.M."/>
            <person name="White S."/>
            <person name="Whitehead S.L."/>
            <person name="Wilkinson J.E."/>
            <person name="Willey D.L."/>
            <person name="Williams H."/>
            <person name="Wilming L."/>
            <person name="Wray P.W."/>
            <person name="Wu Z."/>
            <person name="Coulson A."/>
            <person name="Vaudin M."/>
            <person name="Sulston J.E."/>
            <person name="Durbin R.M."/>
            <person name="Hubbard T."/>
            <person name="Wooster R."/>
            <person name="Dunham I."/>
            <person name="Carter N.P."/>
            <person name="McVean G."/>
            <person name="Ross M.T."/>
            <person name="Harrow J."/>
            <person name="Olson M.V."/>
            <person name="Beck S."/>
            <person name="Rogers J."/>
            <person name="Bentley D.R."/>
        </authorList>
    </citation>
    <scope>NUCLEOTIDE SEQUENCE [LARGE SCALE GENOMIC DNA]</scope>
</reference>
<reference key="5">
    <citation type="journal article" date="2004" name="Genome Res.">
        <title>The status, quality, and expansion of the NIH full-length cDNA project: the Mammalian Gene Collection (MGC).</title>
        <authorList>
            <consortium name="The MGC Project Team"/>
        </authorList>
    </citation>
    <scope>NUCLEOTIDE SEQUENCE [LARGE SCALE MRNA]</scope>
    <source>
        <tissue>Eye</tissue>
        <tissue>Skin</tissue>
    </source>
</reference>
<reference key="6">
    <citation type="submission" date="2005-03" db="EMBL/GenBank/DDBJ databases">
        <authorList>
            <person name="Wen G.B."/>
            <person name="Yang J."/>
            <person name="Cao R.X."/>
            <person name="Liu J.H."/>
            <person name="Peng Z.L."/>
        </authorList>
    </citation>
    <scope>NUCLEOTIDE SEQUENCE [MRNA] OF 2-98</scope>
    <source>
        <tissue>Thyroid</tissue>
    </source>
</reference>
<reference key="7">
    <citation type="journal article" date="2003" name="J. Cell Sci.">
        <title>S100A13 mediates the copper-dependent stress-induced release of IL-1alpha from both human U937 and murine NIH 3T3 cells.</title>
        <authorList>
            <person name="Mandinova A."/>
            <person name="Soldi R."/>
            <person name="Graziani I."/>
            <person name="Bagala C."/>
            <person name="Bellum S."/>
            <person name="Landriscina M."/>
            <person name="Tarantini F."/>
            <person name="Prudovsky I."/>
            <person name="Maciag T."/>
        </authorList>
    </citation>
    <scope>FUNCTION</scope>
</reference>
<reference key="8">
    <citation type="journal article" date="2010" name="J. Formos. Med. Assoc.">
        <title>Effect of human S100A13 gene silencing on FGF-1 transportation in human endothelial cells.</title>
        <authorList>
            <person name="Cao R."/>
            <person name="Yan B."/>
            <person name="Yang H."/>
            <person name="Zu X."/>
            <person name="Wen G."/>
            <person name="Zhong J."/>
        </authorList>
    </citation>
    <scope>FUNCTION</scope>
</reference>
<reference key="9">
    <citation type="journal article" date="2011" name="BMC Syst. Biol.">
        <title>Initial characterization of the human central proteome.</title>
        <authorList>
            <person name="Burkard T.R."/>
            <person name="Planyavsky M."/>
            <person name="Kaupe I."/>
            <person name="Breitwieser F.P."/>
            <person name="Buerckstuemmer T."/>
            <person name="Bennett K.L."/>
            <person name="Superti-Furga G."/>
            <person name="Colinge J."/>
        </authorList>
    </citation>
    <scope>IDENTIFICATION BY MASS SPECTROMETRY [LARGE SCALE ANALYSIS]</scope>
</reference>
<reference key="10">
    <citation type="journal article" date="2005" name="Angew. Chem. Int. Ed.">
        <title>Structural interplay between calcium(II) and copper(II) binding to S100A13 protein.</title>
        <authorList>
            <person name="Arnesano F."/>
            <person name="Banci L."/>
            <person name="Bertini I."/>
            <person name="Fantoni A."/>
            <person name="Tenori L."/>
            <person name="Viezzoli M.S."/>
        </authorList>
    </citation>
    <scope>STRUCTURE BY NMR IN COMPLEX WITH CALCIUM IONS</scope>
    <scope>COPPER-BINDING</scope>
    <scope>SUBUNIT</scope>
</reference>
<reference key="11">
    <citation type="journal article" date="2007" name="Biochem. Biophys. Res. Commun.">
        <title>Crystal structure study on human S100A13 at 2.0 A resolution.</title>
        <authorList>
            <person name="Li M."/>
            <person name="Zhang P.F."/>
            <person name="Pan X.W."/>
            <person name="Chang W.R."/>
        </authorList>
    </citation>
    <scope>X-RAY CRYSTALLOGRAPHY (2.0 ANGSTROMS) IN COMPLEX WITH CALCIUM IONS</scope>
    <scope>SUBUNIT</scope>
</reference>
<reference key="12">
    <citation type="journal article" date="2008" name="Acta Crystallogr. F">
        <title>Structure of calcium-bound human S100A13 at pH 7.5 at 1.8 A resolution.</title>
        <authorList>
            <person name="Imai F.L."/>
            <person name="Nagata K."/>
            <person name="Yonezawa N."/>
            <person name="Nakano M."/>
            <person name="Tanokura M."/>
        </authorList>
    </citation>
    <scope>X-RAY CRYSTALLOGRAPHY (1.8 ANGSTROMS) IN COMPLEX WITH CALCIUM IONS</scope>
    <scope>SUBUNIT</scope>
</reference>
<reference key="13">
    <citation type="journal article" date="2009" name="Biochem. Biophys. Res. Commun.">
        <title>S100A13-C2A binary complex structure-a key component in the acidic fibroblast growth factor for the non-classical pathway.</title>
        <authorList>
            <person name="Mohan S.K."/>
            <person name="Rani S.G."/>
            <person name="Kumar S.M."/>
            <person name="Yu C."/>
        </authorList>
    </citation>
    <scope>STRUCTURE BY NMR IN COMPLEX WITH SYT1</scope>
    <scope>SUBUNIT</scope>
</reference>
<reference evidence="6" key="14">
    <citation type="journal article" date="2011" name="J. Biol. Chem.">
        <title>The IL1alpha-S100A13 heterotetrameric complex structure: a component in the non-classical pathway for interleukin 1alpha secretion.</title>
        <authorList>
            <person name="Mohan S.K."/>
            <person name="Yu C."/>
        </authorList>
    </citation>
    <scope>STRUCTURE BY NMR</scope>
    <scope>INTERACTION WITH IL1A</scope>
</reference>
<evidence type="ECO:0000250" key="1">
    <source>
        <dbReference type="UniProtKB" id="P97352"/>
    </source>
</evidence>
<evidence type="ECO:0000269" key="2">
    <source>
    </source>
</evidence>
<evidence type="ECO:0000269" key="3">
    <source>
    </source>
</evidence>
<evidence type="ECO:0000269" key="4">
    <source>
    </source>
</evidence>
<evidence type="ECO:0000305" key="5"/>
<evidence type="ECO:0007744" key="6">
    <source>
        <dbReference type="PDB" id="2L5X"/>
    </source>
</evidence>
<evidence type="ECO:0007829" key="7">
    <source>
        <dbReference type="PDB" id="1YUR"/>
    </source>
</evidence>
<evidence type="ECO:0007829" key="8">
    <source>
        <dbReference type="PDB" id="2EGD"/>
    </source>
</evidence>
<evidence type="ECO:0007829" key="9">
    <source>
        <dbReference type="PDB" id="2H2K"/>
    </source>
</evidence>
<evidence type="ECO:0007829" key="10">
    <source>
        <dbReference type="PDB" id="2K8M"/>
    </source>
</evidence>
<evidence type="ECO:0007829" key="11">
    <source>
        <dbReference type="PDB" id="2KI4"/>
    </source>
</evidence>
<organism>
    <name type="scientific">Homo sapiens</name>
    <name type="common">Human</name>
    <dbReference type="NCBI Taxonomy" id="9606"/>
    <lineage>
        <taxon>Eukaryota</taxon>
        <taxon>Metazoa</taxon>
        <taxon>Chordata</taxon>
        <taxon>Craniata</taxon>
        <taxon>Vertebrata</taxon>
        <taxon>Euteleostomi</taxon>
        <taxon>Mammalia</taxon>
        <taxon>Eutheria</taxon>
        <taxon>Euarchontoglires</taxon>
        <taxon>Primates</taxon>
        <taxon>Haplorrhini</taxon>
        <taxon>Catarrhini</taxon>
        <taxon>Hominidae</taxon>
        <taxon>Homo</taxon>
    </lineage>
</organism>
<dbReference type="EMBL" id="X99920">
    <property type="protein sequence ID" value="CAA68188.1"/>
    <property type="molecule type" value="mRNA"/>
</dbReference>
<dbReference type="EMBL" id="CR542149">
    <property type="protein sequence ID" value="CAG46946.1"/>
    <property type="molecule type" value="mRNA"/>
</dbReference>
<dbReference type="EMBL" id="BT006724">
    <property type="protein sequence ID" value="AAP35370.1"/>
    <property type="molecule type" value="mRNA"/>
</dbReference>
<dbReference type="EMBL" id="BX470102">
    <property type="status" value="NOT_ANNOTATED_CDS"/>
    <property type="molecule type" value="Genomic_DNA"/>
</dbReference>
<dbReference type="EMBL" id="BC000632">
    <property type="protein sequence ID" value="AAH00632.1"/>
    <property type="molecule type" value="mRNA"/>
</dbReference>
<dbReference type="EMBL" id="BC068064">
    <property type="protein sequence ID" value="AAH68064.1"/>
    <property type="molecule type" value="mRNA"/>
</dbReference>
<dbReference type="EMBL" id="BC070291">
    <property type="protein sequence ID" value="AAH70291.1"/>
    <property type="molecule type" value="mRNA"/>
</dbReference>
<dbReference type="EMBL" id="AY987392">
    <property type="protein sequence ID" value="AAX89402.1"/>
    <property type="molecule type" value="mRNA"/>
</dbReference>
<dbReference type="CCDS" id="CCDS30874.1"/>
<dbReference type="PIR" id="JC5064">
    <property type="entry name" value="JC5064"/>
</dbReference>
<dbReference type="RefSeq" id="NP_001019381.1">
    <property type="nucleotide sequence ID" value="NM_001024210.2"/>
</dbReference>
<dbReference type="RefSeq" id="NP_001019382.1">
    <property type="nucleotide sequence ID" value="NM_001024211.2"/>
</dbReference>
<dbReference type="RefSeq" id="NP_001019383.1">
    <property type="nucleotide sequence ID" value="NM_001024212.2"/>
</dbReference>
<dbReference type="RefSeq" id="NP_001019384.1">
    <property type="nucleotide sequence ID" value="NM_001024213.2"/>
</dbReference>
<dbReference type="RefSeq" id="NP_005970.1">
    <property type="nucleotide sequence ID" value="NM_005979.3"/>
</dbReference>
<dbReference type="RefSeq" id="XP_005245491.1">
    <property type="nucleotide sequence ID" value="XM_005245434.4"/>
</dbReference>
<dbReference type="RefSeq" id="XP_011508164.1">
    <property type="nucleotide sequence ID" value="XM_011509862.4"/>
</dbReference>
<dbReference type="RefSeq" id="XP_011508165.1">
    <property type="nucleotide sequence ID" value="XM_011509863.2"/>
</dbReference>
<dbReference type="RefSeq" id="XP_011508166.1">
    <property type="nucleotide sequence ID" value="XM_011509864.1"/>
</dbReference>
<dbReference type="RefSeq" id="XP_016857523.1">
    <property type="nucleotide sequence ID" value="XM_017002034.3"/>
</dbReference>
<dbReference type="RefSeq" id="XP_016857524.1">
    <property type="nucleotide sequence ID" value="XM_017002035.3"/>
</dbReference>
<dbReference type="RefSeq" id="XP_016857525.1">
    <property type="nucleotide sequence ID" value="XM_017002036.2"/>
</dbReference>
<dbReference type="RefSeq" id="XP_047283357.1">
    <property type="nucleotide sequence ID" value="XM_047427401.1"/>
</dbReference>
<dbReference type="RefSeq" id="XP_047283360.1">
    <property type="nucleotide sequence ID" value="XM_047427404.1"/>
</dbReference>
<dbReference type="RefSeq" id="XP_047283362.1">
    <property type="nucleotide sequence ID" value="XM_047427406.1"/>
</dbReference>
<dbReference type="RefSeq" id="XP_047283363.1">
    <property type="nucleotide sequence ID" value="XM_047427407.1"/>
</dbReference>
<dbReference type="RefSeq" id="XP_047283364.1">
    <property type="nucleotide sequence ID" value="XM_047427408.1"/>
</dbReference>
<dbReference type="RefSeq" id="XP_047283365.1">
    <property type="nucleotide sequence ID" value="XM_047427409.1"/>
</dbReference>
<dbReference type="RefSeq" id="XP_047283366.1">
    <property type="nucleotide sequence ID" value="XM_047427410.1"/>
</dbReference>
<dbReference type="RefSeq" id="XP_047283369.1">
    <property type="nucleotide sequence ID" value="XM_047427413.1"/>
</dbReference>
<dbReference type="RefSeq" id="XP_047283373.1">
    <property type="nucleotide sequence ID" value="XM_047427417.1"/>
</dbReference>
<dbReference type="RefSeq" id="XP_047283375.1">
    <property type="nucleotide sequence ID" value="XM_047427419.1"/>
</dbReference>
<dbReference type="RefSeq" id="XP_047283389.1">
    <property type="nucleotide sequence ID" value="XM_047427433.1"/>
</dbReference>
<dbReference type="RefSeq" id="XP_047283391.1">
    <property type="nucleotide sequence ID" value="XM_047427435.1"/>
</dbReference>
<dbReference type="RefSeq" id="XP_047283395.1">
    <property type="nucleotide sequence ID" value="XM_047427439.1"/>
</dbReference>
<dbReference type="RefSeq" id="XP_047283400.1">
    <property type="nucleotide sequence ID" value="XM_047427444.1"/>
</dbReference>
<dbReference type="RefSeq" id="XP_047283401.1">
    <property type="nucleotide sequence ID" value="XM_047427445.1"/>
</dbReference>
<dbReference type="RefSeq" id="XP_047283402.1">
    <property type="nucleotide sequence ID" value="XM_047427446.1"/>
</dbReference>
<dbReference type="RefSeq" id="XP_054194090.1">
    <property type="nucleotide sequence ID" value="XM_054338115.1"/>
</dbReference>
<dbReference type="RefSeq" id="XP_054194091.1">
    <property type="nucleotide sequence ID" value="XM_054338116.1"/>
</dbReference>
<dbReference type="RefSeq" id="XP_054194092.1">
    <property type="nucleotide sequence ID" value="XM_054338117.1"/>
</dbReference>
<dbReference type="RefSeq" id="XP_054194093.1">
    <property type="nucleotide sequence ID" value="XM_054338118.1"/>
</dbReference>
<dbReference type="RefSeq" id="XP_054194094.1">
    <property type="nucleotide sequence ID" value="XM_054338119.1"/>
</dbReference>
<dbReference type="RefSeq" id="XP_054194095.1">
    <property type="nucleotide sequence ID" value="XM_054338120.1"/>
</dbReference>
<dbReference type="RefSeq" id="XP_054194096.1">
    <property type="nucleotide sequence ID" value="XM_054338121.1"/>
</dbReference>
<dbReference type="RefSeq" id="XP_054194097.1">
    <property type="nucleotide sequence ID" value="XM_054338122.1"/>
</dbReference>
<dbReference type="RefSeq" id="XP_054194098.1">
    <property type="nucleotide sequence ID" value="XM_054338123.1"/>
</dbReference>
<dbReference type="RefSeq" id="XP_054194099.1">
    <property type="nucleotide sequence ID" value="XM_054338124.1"/>
</dbReference>
<dbReference type="RefSeq" id="XP_054194100.1">
    <property type="nucleotide sequence ID" value="XM_054338125.1"/>
</dbReference>
<dbReference type="RefSeq" id="XP_054194101.1">
    <property type="nucleotide sequence ID" value="XM_054338126.1"/>
</dbReference>
<dbReference type="RefSeq" id="XP_054194102.1">
    <property type="nucleotide sequence ID" value="XM_054338127.1"/>
</dbReference>
<dbReference type="RefSeq" id="XP_054194103.1">
    <property type="nucleotide sequence ID" value="XM_054338128.1"/>
</dbReference>
<dbReference type="RefSeq" id="XP_054194104.1">
    <property type="nucleotide sequence ID" value="XM_054338129.1"/>
</dbReference>
<dbReference type="RefSeq" id="XP_054194105.1">
    <property type="nucleotide sequence ID" value="XM_054338130.1"/>
</dbReference>
<dbReference type="RefSeq" id="XP_054194106.1">
    <property type="nucleotide sequence ID" value="XM_054338131.1"/>
</dbReference>
<dbReference type="RefSeq" id="XP_054194107.1">
    <property type="nucleotide sequence ID" value="XM_054338132.1"/>
</dbReference>
<dbReference type="RefSeq" id="XP_054194108.1">
    <property type="nucleotide sequence ID" value="XM_054338133.1"/>
</dbReference>
<dbReference type="RefSeq" id="XP_054194109.1">
    <property type="nucleotide sequence ID" value="XM_054338134.1"/>
</dbReference>
<dbReference type="PDB" id="1YUR">
    <property type="method" value="NMR"/>
    <property type="chains" value="A/B=1-98"/>
</dbReference>
<dbReference type="PDB" id="1YUS">
    <property type="method" value="NMR"/>
    <property type="chains" value="A/B=1-98"/>
</dbReference>
<dbReference type="PDB" id="1YUT">
    <property type="method" value="NMR"/>
    <property type="chains" value="A/B=1-98"/>
</dbReference>
<dbReference type="PDB" id="1YUU">
    <property type="method" value="NMR"/>
    <property type="chains" value="A/B=1-98"/>
</dbReference>
<dbReference type="PDB" id="2EGD">
    <property type="method" value="X-ray"/>
    <property type="resolution" value="1.80 A"/>
    <property type="chains" value="A/B=1-98"/>
</dbReference>
<dbReference type="PDB" id="2H2K">
    <property type="method" value="X-ray"/>
    <property type="resolution" value="2.00 A"/>
    <property type="chains" value="A/B=1-98"/>
</dbReference>
<dbReference type="PDB" id="2K8M">
    <property type="method" value="NMR"/>
    <property type="chains" value="B/C=1-98"/>
</dbReference>
<dbReference type="PDB" id="2KI4">
    <property type="method" value="NMR"/>
    <property type="chains" value="B/C=1-98"/>
</dbReference>
<dbReference type="PDB" id="2KI6">
    <property type="method" value="NMR"/>
    <property type="chains" value="C/D=1-98"/>
</dbReference>
<dbReference type="PDB" id="2KOT">
    <property type="method" value="NMR"/>
    <property type="chains" value="A/B=1-98"/>
</dbReference>
<dbReference type="PDB" id="2L5X">
    <property type="method" value="NMR"/>
    <property type="chains" value="B/C=1-98"/>
</dbReference>
<dbReference type="PDB" id="2LE9">
    <property type="method" value="NMR"/>
    <property type="chains" value="B/C=2-98"/>
</dbReference>
<dbReference type="PDBsum" id="1YUR"/>
<dbReference type="PDBsum" id="1YUS"/>
<dbReference type="PDBsum" id="1YUT"/>
<dbReference type="PDBsum" id="1YUU"/>
<dbReference type="PDBsum" id="2EGD"/>
<dbReference type="PDBsum" id="2H2K"/>
<dbReference type="PDBsum" id="2K8M"/>
<dbReference type="PDBsum" id="2KI4"/>
<dbReference type="PDBsum" id="2KI6"/>
<dbReference type="PDBsum" id="2KOT"/>
<dbReference type="PDBsum" id="2L5X"/>
<dbReference type="PDBsum" id="2LE9"/>
<dbReference type="BMRB" id="Q99584"/>
<dbReference type="SMR" id="Q99584"/>
<dbReference type="BioGRID" id="112192">
    <property type="interactions" value="44"/>
</dbReference>
<dbReference type="FunCoup" id="Q99584">
    <property type="interactions" value="719"/>
</dbReference>
<dbReference type="IntAct" id="Q99584">
    <property type="interactions" value="27"/>
</dbReference>
<dbReference type="MINT" id="Q99584"/>
<dbReference type="STRING" id="9606.ENSP00000392767"/>
<dbReference type="DrugBank" id="DB01025">
    <property type="generic name" value="Amlexanox"/>
</dbReference>
<dbReference type="DrugBank" id="DB01373">
    <property type="generic name" value="Calcium"/>
</dbReference>
<dbReference type="DrugBank" id="DB01164">
    <property type="generic name" value="Calcium chloride"/>
</dbReference>
<dbReference type="DrugBank" id="DB11093">
    <property type="generic name" value="Calcium citrate"/>
</dbReference>
<dbReference type="DrugBank" id="DB11348">
    <property type="generic name" value="Calcium Phosphate"/>
</dbReference>
<dbReference type="DrugBank" id="DB14481">
    <property type="generic name" value="Calcium phosphate dihydrate"/>
</dbReference>
<dbReference type="DrugBank" id="DB00768">
    <property type="generic name" value="Olopatadine"/>
</dbReference>
<dbReference type="GlyGen" id="Q99584">
    <property type="glycosylation" value="1 site, 1 O-linked glycan (1 site)"/>
</dbReference>
<dbReference type="iPTMnet" id="Q99584"/>
<dbReference type="PhosphoSitePlus" id="Q99584"/>
<dbReference type="BioMuta" id="S100A13"/>
<dbReference type="DMDM" id="2493416"/>
<dbReference type="jPOST" id="Q99584"/>
<dbReference type="MassIVE" id="Q99584"/>
<dbReference type="PaxDb" id="9606-ENSP00000357688"/>
<dbReference type="PeptideAtlas" id="Q99584"/>
<dbReference type="ProteomicsDB" id="78342"/>
<dbReference type="Pumba" id="Q99584"/>
<dbReference type="TopDownProteomics" id="Q99584"/>
<dbReference type="Antibodypedia" id="34130">
    <property type="antibodies" value="186 antibodies from 30 providers"/>
</dbReference>
<dbReference type="DNASU" id="6284"/>
<dbReference type="Ensembl" id="ENST00000339556.8">
    <property type="protein sequence ID" value="ENSP00000344822.3"/>
    <property type="gene ID" value="ENSG00000189171.16"/>
</dbReference>
<dbReference type="Ensembl" id="ENST00000392622.3">
    <property type="protein sequence ID" value="ENSP00000376398.1"/>
    <property type="gene ID" value="ENSG00000189171.16"/>
</dbReference>
<dbReference type="Ensembl" id="ENST00000392623.5">
    <property type="protein sequence ID" value="ENSP00000376399.1"/>
    <property type="gene ID" value="ENSG00000189171.16"/>
</dbReference>
<dbReference type="Ensembl" id="ENST00000440685.7">
    <property type="protein sequence ID" value="ENSP00000392767.2"/>
    <property type="gene ID" value="ENSG00000189171.16"/>
</dbReference>
<dbReference type="Ensembl" id="ENST00000476133.6">
    <property type="protein sequence ID" value="ENSP00000507299.1"/>
    <property type="gene ID" value="ENSG00000189171.16"/>
</dbReference>
<dbReference type="Ensembl" id="ENST00000484413.6">
    <property type="protein sequence ID" value="ENSP00000520622.1"/>
    <property type="gene ID" value="ENSG00000189171.16"/>
</dbReference>
<dbReference type="Ensembl" id="ENST00000491177.2">
    <property type="protein sequence ID" value="ENSP00000520624.1"/>
    <property type="gene ID" value="ENSG00000189171.16"/>
</dbReference>
<dbReference type="Ensembl" id="ENST00000497086.6">
    <property type="protein sequence ID" value="ENSP00000520623.1"/>
    <property type="gene ID" value="ENSG00000189171.16"/>
</dbReference>
<dbReference type="GeneID" id="6284"/>
<dbReference type="KEGG" id="hsa:6284"/>
<dbReference type="MANE-Select" id="ENST00000476133.6">
    <property type="protein sequence ID" value="ENSP00000507299.1"/>
    <property type="RefSeq nucleotide sequence ID" value="NM_001024211.2"/>
    <property type="RefSeq protein sequence ID" value="NP_001019382.1"/>
</dbReference>
<dbReference type="UCSC" id="uc001fcf.5">
    <property type="organism name" value="human"/>
</dbReference>
<dbReference type="AGR" id="HGNC:10490"/>
<dbReference type="CTD" id="6284"/>
<dbReference type="DisGeNET" id="6284"/>
<dbReference type="GeneCards" id="S100A13"/>
<dbReference type="HGNC" id="HGNC:10490">
    <property type="gene designation" value="S100A13"/>
</dbReference>
<dbReference type="HPA" id="ENSG00000189171">
    <property type="expression patterns" value="Low tissue specificity"/>
</dbReference>
<dbReference type="MIM" id="601989">
    <property type="type" value="gene"/>
</dbReference>
<dbReference type="neXtProt" id="NX_Q99584"/>
<dbReference type="OpenTargets" id="ENSG00000189171"/>
<dbReference type="PharmGKB" id="PA34902"/>
<dbReference type="VEuPathDB" id="HostDB:ENSG00000189171"/>
<dbReference type="eggNOG" id="ENOG502S3RT">
    <property type="taxonomic scope" value="Eukaryota"/>
</dbReference>
<dbReference type="GeneTree" id="ENSGT00940000161854"/>
<dbReference type="HOGENOM" id="CLU_138624_3_0_1"/>
<dbReference type="InParanoid" id="Q99584"/>
<dbReference type="OMA" id="TFFTFAK"/>
<dbReference type="OrthoDB" id="8442111at2759"/>
<dbReference type="PAN-GO" id="Q99584">
    <property type="GO annotations" value="7 GO annotations based on evolutionary models"/>
</dbReference>
<dbReference type="PhylomeDB" id="Q99584"/>
<dbReference type="TreeFam" id="TF332727"/>
<dbReference type="PathwayCommons" id="Q99584"/>
<dbReference type="SignaLink" id="Q99584"/>
<dbReference type="SIGNOR" id="Q99584"/>
<dbReference type="BioGRID-ORCS" id="6284">
    <property type="hits" value="11 hits in 1161 CRISPR screens"/>
</dbReference>
<dbReference type="CD-CODE" id="91857CE7">
    <property type="entry name" value="Nucleolus"/>
</dbReference>
<dbReference type="ChiTaRS" id="S100A13">
    <property type="organism name" value="human"/>
</dbReference>
<dbReference type="EvolutionaryTrace" id="Q99584"/>
<dbReference type="GeneWiki" id="S100A13"/>
<dbReference type="GenomeRNAi" id="6284"/>
<dbReference type="Pharos" id="Q99584">
    <property type="development level" value="Tbio"/>
</dbReference>
<dbReference type="PRO" id="PR:Q99584"/>
<dbReference type="Proteomes" id="UP000005640">
    <property type="component" value="Chromosome 1"/>
</dbReference>
<dbReference type="RNAct" id="Q99584">
    <property type="molecule type" value="protein"/>
</dbReference>
<dbReference type="Bgee" id="ENSG00000189171">
    <property type="expression patterns" value="Expressed in right lobe of thyroid gland and 110 other cell types or tissues"/>
</dbReference>
<dbReference type="GO" id="GO:0005737">
    <property type="term" value="C:cytoplasm"/>
    <property type="evidence" value="ECO:0000314"/>
    <property type="project" value="UniProtKB"/>
</dbReference>
<dbReference type="GO" id="GO:0005829">
    <property type="term" value="C:cytosol"/>
    <property type="evidence" value="ECO:0000314"/>
    <property type="project" value="UniProtKB"/>
</dbReference>
<dbReference type="GO" id="GO:0005576">
    <property type="term" value="C:extracellular region"/>
    <property type="evidence" value="ECO:0007005"/>
    <property type="project" value="BHF-UCL"/>
</dbReference>
<dbReference type="GO" id="GO:0005615">
    <property type="term" value="C:extracellular space"/>
    <property type="evidence" value="ECO:0000314"/>
    <property type="project" value="UniProtKB"/>
</dbReference>
<dbReference type="GO" id="GO:0005730">
    <property type="term" value="C:nucleolus"/>
    <property type="evidence" value="ECO:0000314"/>
    <property type="project" value="HPA"/>
</dbReference>
<dbReference type="GO" id="GO:0005654">
    <property type="term" value="C:nucleoplasm"/>
    <property type="evidence" value="ECO:0000314"/>
    <property type="project" value="HPA"/>
</dbReference>
<dbReference type="GO" id="GO:0005634">
    <property type="term" value="C:nucleus"/>
    <property type="evidence" value="ECO:0000314"/>
    <property type="project" value="UniProtKB"/>
</dbReference>
<dbReference type="GO" id="GO:0048471">
    <property type="term" value="C:perinuclear region of cytoplasm"/>
    <property type="evidence" value="ECO:0000314"/>
    <property type="project" value="UniProtKB"/>
</dbReference>
<dbReference type="GO" id="GO:0005886">
    <property type="term" value="C:plasma membrane"/>
    <property type="evidence" value="ECO:0000314"/>
    <property type="project" value="HPA"/>
</dbReference>
<dbReference type="GO" id="GO:0005509">
    <property type="term" value="F:calcium ion binding"/>
    <property type="evidence" value="ECO:0000314"/>
    <property type="project" value="UniProtKB"/>
</dbReference>
<dbReference type="GO" id="GO:0048306">
    <property type="term" value="F:calcium-dependent protein binding"/>
    <property type="evidence" value="ECO:0000318"/>
    <property type="project" value="GO_Central"/>
</dbReference>
<dbReference type="GO" id="GO:0005507">
    <property type="term" value="F:copper ion binding"/>
    <property type="evidence" value="ECO:0000314"/>
    <property type="project" value="UniProtKB"/>
</dbReference>
<dbReference type="GO" id="GO:0017134">
    <property type="term" value="F:fibroblast growth factor binding"/>
    <property type="evidence" value="ECO:0000353"/>
    <property type="project" value="UniProtKB"/>
</dbReference>
<dbReference type="GO" id="GO:0008289">
    <property type="term" value="F:lipid binding"/>
    <property type="evidence" value="ECO:0007669"/>
    <property type="project" value="UniProtKB-KW"/>
</dbReference>
<dbReference type="GO" id="GO:0042803">
    <property type="term" value="F:protein homodimerization activity"/>
    <property type="evidence" value="ECO:0000353"/>
    <property type="project" value="UniProtKB"/>
</dbReference>
<dbReference type="GO" id="GO:0050786">
    <property type="term" value="F:RAGE receptor binding"/>
    <property type="evidence" value="ECO:0000353"/>
    <property type="project" value="UniProtKB"/>
</dbReference>
<dbReference type="GO" id="GO:0008270">
    <property type="term" value="F:zinc ion binding"/>
    <property type="evidence" value="ECO:0000314"/>
    <property type="project" value="UniProtKB"/>
</dbReference>
<dbReference type="GO" id="GO:0043303">
    <property type="term" value="P:mast cell degranulation"/>
    <property type="evidence" value="ECO:0000303"/>
    <property type="project" value="UniProtKB"/>
</dbReference>
<dbReference type="GO" id="GO:0043123">
    <property type="term" value="P:positive regulation of canonical NF-kappaB signal transduction"/>
    <property type="evidence" value="ECO:0000314"/>
    <property type="project" value="UniProtKB"/>
</dbReference>
<dbReference type="GO" id="GO:0001819">
    <property type="term" value="P:positive regulation of cytokine production"/>
    <property type="evidence" value="ECO:0000315"/>
    <property type="project" value="UniProtKB"/>
</dbReference>
<dbReference type="GO" id="GO:0032730">
    <property type="term" value="P:positive regulation of interleukin-1 alpha production"/>
    <property type="evidence" value="ECO:0000314"/>
    <property type="project" value="UniProtKB"/>
</dbReference>
<dbReference type="GO" id="GO:0015031">
    <property type="term" value="P:protein transport"/>
    <property type="evidence" value="ECO:0007669"/>
    <property type="project" value="UniProtKB-KW"/>
</dbReference>
<dbReference type="CDD" id="cd05022">
    <property type="entry name" value="S-100A13"/>
    <property type="match status" value="1"/>
</dbReference>
<dbReference type="FunFam" id="1.10.238.10:FF:000260">
    <property type="entry name" value="Protein S100-A13"/>
    <property type="match status" value="1"/>
</dbReference>
<dbReference type="Gene3D" id="1.10.238.10">
    <property type="entry name" value="EF-hand"/>
    <property type="match status" value="1"/>
</dbReference>
<dbReference type="InterPro" id="IPR011992">
    <property type="entry name" value="EF-hand-dom_pair"/>
</dbReference>
<dbReference type="InterPro" id="IPR013787">
    <property type="entry name" value="S100_Ca-bd_sub"/>
</dbReference>
<dbReference type="PANTHER" id="PTHR11639:SF57">
    <property type="entry name" value="PROTEIN S100-A13"/>
    <property type="match status" value="1"/>
</dbReference>
<dbReference type="PANTHER" id="PTHR11639">
    <property type="entry name" value="S100 CALCIUM-BINDING PROTEIN"/>
    <property type="match status" value="1"/>
</dbReference>
<dbReference type="Pfam" id="PF01023">
    <property type="entry name" value="S_100"/>
    <property type="match status" value="1"/>
</dbReference>
<dbReference type="SMART" id="SM01394">
    <property type="entry name" value="S_100"/>
    <property type="match status" value="1"/>
</dbReference>
<dbReference type="SUPFAM" id="SSF47473">
    <property type="entry name" value="EF-hand"/>
    <property type="match status" value="1"/>
</dbReference>
<accession>Q99584</accession>
<accession>Q52PI9</accession>
<accession>Q6FGF8</accession>
<name>S10AD_HUMAN</name>
<gene>
    <name type="primary">S100A13</name>
</gene>
<feature type="chain" id="PRO_0000144019" description="Protein S100-A13">
    <location>
        <begin position="1"/>
        <end position="98"/>
    </location>
</feature>
<feature type="domain" description="EF-hand">
    <location>
        <begin position="18"/>
        <end position="53"/>
    </location>
</feature>
<feature type="binding site" evidence="5">
    <location>
        <position position="32"/>
    </location>
    <ligand>
        <name>Ca(2+)</name>
        <dbReference type="ChEBI" id="CHEBI:29108"/>
        <label>1</label>
    </ligand>
</feature>
<feature type="binding site" evidence="5">
    <location>
        <position position="37"/>
    </location>
    <ligand>
        <name>Ca(2+)</name>
        <dbReference type="ChEBI" id="CHEBI:29108"/>
        <label>1</label>
    </ligand>
</feature>
<feature type="binding site" evidence="5">
    <location>
        <position position="64"/>
    </location>
    <ligand>
        <name>Ca(2+)</name>
        <dbReference type="ChEBI" id="CHEBI:29108"/>
        <label>2</label>
    </ligand>
</feature>
<feature type="binding site" evidence="5">
    <location>
        <position position="66"/>
    </location>
    <ligand>
        <name>Ca(2+)</name>
        <dbReference type="ChEBI" id="CHEBI:29108"/>
        <label>2</label>
    </ligand>
</feature>
<feature type="binding site" evidence="5">
    <location>
        <position position="68"/>
    </location>
    <ligand>
        <name>Ca(2+)</name>
        <dbReference type="ChEBI" id="CHEBI:29108"/>
        <label>2</label>
    </ligand>
</feature>
<feature type="binding site" evidence="5">
    <location>
        <position position="70"/>
    </location>
    <ligand>
        <name>Ca(2+)</name>
        <dbReference type="ChEBI" id="CHEBI:29108"/>
        <label>2</label>
    </ligand>
</feature>
<feature type="binding site" evidence="5">
    <location>
        <position position="75"/>
    </location>
    <ligand>
        <name>Ca(2+)</name>
        <dbReference type="ChEBI" id="CHEBI:29108"/>
        <label>2</label>
    </ligand>
</feature>
<feature type="modified residue" description="Phosphoserine" evidence="1">
    <location>
        <position position="32"/>
    </location>
</feature>
<feature type="helix" evidence="9">
    <location>
        <begin position="1"/>
        <end position="3"/>
    </location>
</feature>
<feature type="helix" evidence="8">
    <location>
        <begin position="8"/>
        <end position="24"/>
    </location>
</feature>
<feature type="strand" evidence="8">
    <location>
        <begin position="26"/>
        <end position="28"/>
    </location>
</feature>
<feature type="strand" evidence="10">
    <location>
        <begin position="32"/>
        <end position="34"/>
    </location>
</feature>
<feature type="helix" evidence="8">
    <location>
        <begin position="35"/>
        <end position="45"/>
    </location>
</feature>
<feature type="turn" evidence="8">
    <location>
        <begin position="47"/>
        <end position="52"/>
    </location>
</feature>
<feature type="strand" evidence="11">
    <location>
        <begin position="53"/>
        <end position="55"/>
    </location>
</feature>
<feature type="helix" evidence="8">
    <location>
        <begin position="56"/>
        <end position="63"/>
    </location>
</feature>
<feature type="strand" evidence="8">
    <location>
        <begin position="67"/>
        <end position="72"/>
    </location>
</feature>
<feature type="helix" evidence="8">
    <location>
        <begin position="73"/>
        <end position="88"/>
    </location>
</feature>
<feature type="helix" evidence="7">
    <location>
        <begin position="93"/>
        <end position="95"/>
    </location>
</feature>
<proteinExistence type="evidence at protein level"/>
<keyword id="KW-0002">3D-structure</keyword>
<keyword id="KW-0106">Calcium</keyword>
<keyword id="KW-0186">Copper</keyword>
<keyword id="KW-0963">Cytoplasm</keyword>
<keyword id="KW-0446">Lipid-binding</keyword>
<keyword id="KW-0479">Metal-binding</keyword>
<keyword id="KW-0597">Phosphoprotein</keyword>
<keyword id="KW-0653">Protein transport</keyword>
<keyword id="KW-1267">Proteomics identification</keyword>
<keyword id="KW-1185">Reference proteome</keyword>
<keyword id="KW-0677">Repeat</keyword>
<keyword id="KW-0964">Secreted</keyword>
<keyword id="KW-0813">Transport</keyword>
<comment type="function">
    <text evidence="1 2 3">Plays a role in the export of proteins that lack a signal peptide and are secreted by an alternative pathway. Binds two calcium ions per subunit. Binds one copper ion. Binding of one copper ion does not interfere with calcium binding. Required for the copper-dependent stress-induced export of IL1A and FGF1. The calcium-free protein binds to lipid vesicles containing phosphatidylserine, but not to vesicles containing phosphatidylcholine (By similarity).</text>
</comment>
<comment type="subunit">
    <text evidence="1 4">Homodimer. Part of a copper-dependent multiprotein complex containing S100A13, FGF1 and SYT1. Interacts with FGF1 and SYT1 (By similarity). Interacts with IL1A (PubMed:21270123).</text>
</comment>
<comment type="interaction">
    <interactant intactId="EBI-721909">
        <id>Q99584</id>
    </interactant>
    <interactant intactId="EBI-742388">
        <id>Q9H8W4</id>
        <label>PLEKHF2</label>
    </interactant>
    <organismsDiffer>false</organismsDiffer>
    <experiments>3</experiments>
</comment>
<comment type="interaction">
    <interactant intactId="EBI-721909">
        <id>Q99584</id>
    </interactant>
    <interactant intactId="EBI-751842">
        <id>Q9HCY8</id>
        <label>S100A14</label>
    </interactant>
    <organismsDiffer>false</organismsDiffer>
    <experiments>5</experiments>
</comment>
<comment type="interaction">
    <interactant intactId="EBI-721909">
        <id>Q99584</id>
    </interactant>
    <interactant intactId="EBI-359977">
        <id>P01375</id>
        <label>TNF</label>
    </interactant>
    <organismsDiffer>false</organismsDiffer>
    <experiments>3</experiments>
</comment>
<comment type="subcellular location">
    <subcellularLocation>
        <location>Cytoplasm</location>
    </subcellularLocation>
    <subcellularLocation>
        <location>Secreted</location>
    </subcellularLocation>
    <text>Secretion is mediated by exposure to stress and requires copper ions.</text>
</comment>
<comment type="tissue specificity">
    <text>Expressed in heart and skeletal muscle.</text>
</comment>
<comment type="similarity">
    <text evidence="5">Belongs to the S-100 family.</text>
</comment>
<comment type="online information" name="Atlas of Genetics and Cytogenetics in Oncology and Haematology">
    <link uri="https://atlasgeneticsoncology.org/gene/44197/S100A13"/>
</comment>